<keyword id="KW-0002">3D-structure</keyword>
<keyword id="KW-0903">Direct protein sequencing</keyword>
<keyword id="KW-0496">Mitochondrion</keyword>
<keyword id="KW-1185">Reference proteome</keyword>
<keyword id="KW-0687">Ribonucleoprotein</keyword>
<keyword id="KW-0689">Ribosomal protein</keyword>
<keyword id="KW-0809">Transit peptide</keyword>
<protein>
    <recommendedName>
        <fullName evidence="9">Large ribosomal subunit protein mL41</fullName>
    </recommendedName>
    <alternativeName>
        <fullName>54S ribosomal protein L27, mitochondrial</fullName>
    </alternativeName>
    <alternativeName>
        <fullName>YmL27</fullName>
    </alternativeName>
</protein>
<gene>
    <name type="primary">MRPL27</name>
    <name type="ordered locus">YBR282W</name>
    <name type="ORF">YBR2019</name>
</gene>
<reference key="1">
    <citation type="journal article" date="1991" name="Biochimie">
        <title>The nuclear coded mitoribosomal proteins YmL27 and YmL31 are both essential for mitochondrial function in yeast.</title>
        <authorList>
            <person name="Graack H.-R."/>
            <person name="Grohmann L."/>
            <person name="Kitakawa M."/>
        </authorList>
    </citation>
    <scope>NUCLEOTIDE SEQUENCE [GENOMIC DNA]</scope>
    <scope>PROTEIN SEQUENCE OF 17-32; 35-40; 46-55 AND 77-92</scope>
</reference>
<reference key="2">
    <citation type="journal article" date="1994" name="Yeast">
        <title>The sequence of a 32,420 bp segment located on the right arm of chromosome II from Saccharomyces cerevisiae.</title>
        <authorList>
            <person name="Holmstroem K."/>
            <person name="Brandt T."/>
            <person name="Kallesoe T."/>
        </authorList>
    </citation>
    <scope>NUCLEOTIDE SEQUENCE [GENOMIC DNA]</scope>
    <source>
        <strain>ATCC 204508 / S288c</strain>
    </source>
</reference>
<reference key="3">
    <citation type="journal article" date="1994" name="EMBO J.">
        <title>Complete DNA sequence of yeast chromosome II.</title>
        <authorList>
            <person name="Feldmann H."/>
            <person name="Aigle M."/>
            <person name="Aljinovic G."/>
            <person name="Andre B."/>
            <person name="Baclet M.C."/>
            <person name="Barthe C."/>
            <person name="Baur A."/>
            <person name="Becam A.-M."/>
            <person name="Biteau N."/>
            <person name="Boles E."/>
            <person name="Brandt T."/>
            <person name="Brendel M."/>
            <person name="Brueckner M."/>
            <person name="Bussereau F."/>
            <person name="Christiansen C."/>
            <person name="Contreras R."/>
            <person name="Crouzet M."/>
            <person name="Cziepluch C."/>
            <person name="Demolis N."/>
            <person name="Delaveau T."/>
            <person name="Doignon F."/>
            <person name="Domdey H."/>
            <person name="Duesterhus S."/>
            <person name="Dubois E."/>
            <person name="Dujon B."/>
            <person name="El Bakkoury M."/>
            <person name="Entian K.-D."/>
            <person name="Feuermann M."/>
            <person name="Fiers W."/>
            <person name="Fobo G.M."/>
            <person name="Fritz C."/>
            <person name="Gassenhuber J."/>
            <person name="Glansdorff N."/>
            <person name="Goffeau A."/>
            <person name="Grivell L.A."/>
            <person name="de Haan M."/>
            <person name="Hein C."/>
            <person name="Herbert C.J."/>
            <person name="Hollenberg C.P."/>
            <person name="Holmstroem K."/>
            <person name="Jacq C."/>
            <person name="Jacquet M."/>
            <person name="Jauniaux J.-C."/>
            <person name="Jonniaux J.-L."/>
            <person name="Kallesoee T."/>
            <person name="Kiesau P."/>
            <person name="Kirchrath L."/>
            <person name="Koetter P."/>
            <person name="Korol S."/>
            <person name="Liebl S."/>
            <person name="Logghe M."/>
            <person name="Lohan A.J.E."/>
            <person name="Louis E.J."/>
            <person name="Li Z.Y."/>
            <person name="Maat M.J."/>
            <person name="Mallet L."/>
            <person name="Mannhaupt G."/>
            <person name="Messenguy F."/>
            <person name="Miosga T."/>
            <person name="Molemans F."/>
            <person name="Mueller S."/>
            <person name="Nasr F."/>
            <person name="Obermaier B."/>
            <person name="Perea J."/>
            <person name="Pierard A."/>
            <person name="Piravandi E."/>
            <person name="Pohl F.M."/>
            <person name="Pohl T.M."/>
            <person name="Potier S."/>
            <person name="Proft M."/>
            <person name="Purnelle B."/>
            <person name="Ramezani Rad M."/>
            <person name="Rieger M."/>
            <person name="Rose M."/>
            <person name="Schaaff-Gerstenschlaeger I."/>
            <person name="Scherens B."/>
            <person name="Schwarzlose C."/>
            <person name="Skala J."/>
            <person name="Slonimski P.P."/>
            <person name="Smits P.H.M."/>
            <person name="Souciet J.-L."/>
            <person name="Steensma H.Y."/>
            <person name="Stucka R."/>
            <person name="Urrestarazu L.A."/>
            <person name="van der Aart Q.J.M."/>
            <person name="Van Dyck L."/>
            <person name="Vassarotti A."/>
            <person name="Vetter I."/>
            <person name="Vierendeels F."/>
            <person name="Vissers S."/>
            <person name="Wagner G."/>
            <person name="de Wergifosse P."/>
            <person name="Wolfe K.H."/>
            <person name="Zagulski M."/>
            <person name="Zimmermann F.K."/>
            <person name="Mewes H.-W."/>
            <person name="Kleine K."/>
        </authorList>
    </citation>
    <scope>NUCLEOTIDE SEQUENCE [LARGE SCALE GENOMIC DNA]</scope>
    <source>
        <strain>ATCC 204508 / S288c</strain>
    </source>
</reference>
<reference key="4">
    <citation type="journal article" date="2014" name="G3 (Bethesda)">
        <title>The reference genome sequence of Saccharomyces cerevisiae: Then and now.</title>
        <authorList>
            <person name="Engel S.R."/>
            <person name="Dietrich F.S."/>
            <person name="Fisk D.G."/>
            <person name="Binkley G."/>
            <person name="Balakrishnan R."/>
            <person name="Costanzo M.C."/>
            <person name="Dwight S.S."/>
            <person name="Hitz B.C."/>
            <person name="Karra K."/>
            <person name="Nash R.S."/>
            <person name="Weng S."/>
            <person name="Wong E.D."/>
            <person name="Lloyd P."/>
            <person name="Skrzypek M.S."/>
            <person name="Miyasato S.R."/>
            <person name="Simison M."/>
            <person name="Cherry J.M."/>
        </authorList>
    </citation>
    <scope>GENOME REANNOTATION</scope>
    <source>
        <strain>ATCC 204508 / S288c</strain>
    </source>
</reference>
<reference key="5">
    <citation type="journal article" date="1991" name="FEBS Lett.">
        <title>Extended N-terminal sequencing of proteins of the large ribosomal subunit from yeast mitochondria.</title>
        <authorList>
            <person name="Grohmann L."/>
            <person name="Graack H.-R."/>
            <person name="Kruft V."/>
            <person name="Choli T."/>
            <person name="Goldschmidt-Reisin S."/>
            <person name="Kitakawa M."/>
        </authorList>
    </citation>
    <scope>PROTEIN SEQUENCE OF 17-57 AND 77-92</scope>
    <scope>SUBUNIT</scope>
    <source>
        <strain>07173</strain>
    </source>
</reference>
<reference key="6">
    <citation type="journal article" date="2002" name="Eur. J. Biochem.">
        <title>Tag-mediated isolation of yeast mitochondrial ribosome and mass spectrometric identification of its new components.</title>
        <authorList>
            <person name="Gan X."/>
            <person name="Kitakawa M."/>
            <person name="Yoshino K."/>
            <person name="Oshiro N."/>
            <person name="Yonezawa K."/>
            <person name="Isono K."/>
        </authorList>
    </citation>
    <scope>IDENTIFICATION IN THE MITOCHONDRIAL RIBOSOMAL LARGE COMPLEX</scope>
    <scope>IDENTIFICATION BY MASS SPECTROMETRY</scope>
</reference>
<reference key="7">
    <citation type="journal article" date="2003" name="Nature">
        <title>Global analysis of protein localization in budding yeast.</title>
        <authorList>
            <person name="Huh W.-K."/>
            <person name="Falvo J.V."/>
            <person name="Gerke L.C."/>
            <person name="Carroll A.S."/>
            <person name="Howson R.W."/>
            <person name="Weissman J.S."/>
            <person name="O'Shea E.K."/>
        </authorList>
    </citation>
    <scope>SUBCELLULAR LOCATION [LARGE SCALE ANALYSIS]</scope>
</reference>
<reference key="8">
    <citation type="journal article" date="2003" name="Nature">
        <title>Global analysis of protein expression in yeast.</title>
        <authorList>
            <person name="Ghaemmaghami S."/>
            <person name="Huh W.-K."/>
            <person name="Bower K."/>
            <person name="Howson R.W."/>
            <person name="Belle A."/>
            <person name="Dephoure N."/>
            <person name="O'Shea E.K."/>
            <person name="Weissman J.S."/>
        </authorList>
    </citation>
    <scope>LEVEL OF PROTEIN EXPRESSION [LARGE SCALE ANALYSIS]</scope>
</reference>
<reference key="9">
    <citation type="journal article" date="2003" name="Proc. Natl. Acad. Sci. U.S.A.">
        <title>The proteome of Saccharomyces cerevisiae mitochondria.</title>
        <authorList>
            <person name="Sickmann A."/>
            <person name="Reinders J."/>
            <person name="Wagner Y."/>
            <person name="Joppich C."/>
            <person name="Zahedi R.P."/>
            <person name="Meyer H.E."/>
            <person name="Schoenfisch B."/>
            <person name="Perschil I."/>
            <person name="Chacinska A."/>
            <person name="Guiard B."/>
            <person name="Rehling P."/>
            <person name="Pfanner N."/>
            <person name="Meisinger C."/>
        </authorList>
    </citation>
    <scope>SUBCELLULAR LOCATION [LARGE SCALE ANALYSIS]</scope>
    <source>
        <strain>ATCC 76625 / YPH499</strain>
    </source>
</reference>
<reference key="10">
    <citation type="journal article" date="2015" name="Nat. Commun.">
        <title>Organization of the mitochondrial translation machinery studied in situ by cryoelectron tomography.</title>
        <authorList>
            <person name="Pfeffer S."/>
            <person name="Woellhaf M.W."/>
            <person name="Herrmann J.M."/>
            <person name="Forster F."/>
        </authorList>
    </citation>
    <scope>SUBCELLULAR LOCATION</scope>
</reference>
<reference key="11">
    <citation type="journal article" date="2014" name="Science">
        <title>Structure of the yeast mitochondrial large ribosomal subunit.</title>
        <authorList>
            <person name="Amunts A."/>
            <person name="Brown A."/>
            <person name="Bai X.C."/>
            <person name="Llacer J.L."/>
            <person name="Hussain T."/>
            <person name="Emsley P."/>
            <person name="Long F."/>
            <person name="Murshudov G."/>
            <person name="Scheres S.H."/>
            <person name="Ramakrishnan V."/>
        </authorList>
    </citation>
    <scope>STRUCTURE BY ELECTRON MICROSCOPY (3.20 ANGSTROMS)</scope>
    <scope>SUBUNIT</scope>
</reference>
<evidence type="ECO:0000269" key="1">
    <source>
    </source>
</evidence>
<evidence type="ECO:0000269" key="2">
    <source>
    </source>
</evidence>
<evidence type="ECO:0000269" key="3">
    <source>
    </source>
</evidence>
<evidence type="ECO:0000269" key="4">
    <source>
    </source>
</evidence>
<evidence type="ECO:0000269" key="5">
    <source>
    </source>
</evidence>
<evidence type="ECO:0000269" key="6">
    <source>
    </source>
</evidence>
<evidence type="ECO:0000269" key="7">
    <source>
    </source>
</evidence>
<evidence type="ECO:0000269" key="8">
    <source>
    </source>
</evidence>
<evidence type="ECO:0000303" key="9">
    <source>
    </source>
</evidence>
<evidence type="ECO:0000305" key="10"/>
<evidence type="ECO:0000305" key="11">
    <source>
    </source>
</evidence>
<evidence type="ECO:0000305" key="12">
    <source>
    </source>
</evidence>
<proteinExistence type="evidence at protein level"/>
<accession>P36526</accession>
<accession>D6VQS7</accession>
<organism>
    <name type="scientific">Saccharomyces cerevisiae (strain ATCC 204508 / S288c)</name>
    <name type="common">Baker's yeast</name>
    <dbReference type="NCBI Taxonomy" id="559292"/>
    <lineage>
        <taxon>Eukaryota</taxon>
        <taxon>Fungi</taxon>
        <taxon>Dikarya</taxon>
        <taxon>Ascomycota</taxon>
        <taxon>Saccharomycotina</taxon>
        <taxon>Saccharomycetes</taxon>
        <taxon>Saccharomycetales</taxon>
        <taxon>Saccharomycetaceae</taxon>
        <taxon>Saccharomyces</taxon>
    </lineage>
</organism>
<feature type="transit peptide" description="Mitochondrion" evidence="5 6">
    <location>
        <begin position="1"/>
        <end position="16"/>
    </location>
</feature>
<feature type="chain" id="PRO_0000030574" description="Large ribosomal subunit protein mL41">
    <location>
        <begin position="17"/>
        <end position="146"/>
    </location>
</feature>
<feature type="sequence conflict" description="In Ref. 1; AAB21096." evidence="10" ref="1">
    <original>L</original>
    <variation>T</variation>
    <location>
        <position position="17"/>
    </location>
</feature>
<feature type="sequence conflict" description="In Ref. 1; AA sequence." evidence="10" ref="1">
    <original>W</original>
    <variation>C</variation>
    <location>
        <position position="21"/>
    </location>
</feature>
<feature type="sequence conflict" description="In Ref. 1; AA sequence." evidence="10" ref="1">
    <original>G</original>
    <variation>H</variation>
    <location>
        <position position="48"/>
    </location>
</feature>
<feature type="sequence conflict" description="In Ref. 5; AA sequence." evidence="10" ref="5">
    <original>R</original>
    <variation>N</variation>
    <location>
        <position position="57"/>
    </location>
</feature>
<feature type="sequence conflict" description="In Ref. 1; AAB21096." evidence="10" ref="1">
    <original>I</original>
    <variation>M</variation>
    <location>
        <position position="72"/>
    </location>
</feature>
<feature type="sequence conflict" description="In Ref. 5; AA sequence." evidence="10" ref="5">
    <original>V</original>
    <variation>Y</variation>
    <location>
        <position position="77"/>
    </location>
</feature>
<feature type="sequence conflict" description="In Ref. 1; AAB21096." evidence="10" ref="1">
    <original>L</original>
    <variation>T</variation>
    <location>
        <position position="101"/>
    </location>
</feature>
<feature type="sequence conflict" description="In Ref. 1; AAB21096." evidence="10" ref="1">
    <original>I</original>
    <variation>M</variation>
    <location>
        <position position="122"/>
    </location>
</feature>
<feature type="sequence conflict" description="In Ref. 1; AAB21096." evidence="10" ref="1">
    <original>I</original>
    <variation>M</variation>
    <location>
        <position position="126"/>
    </location>
</feature>
<sequence length="146" mass="16492">MKGSPISQFSKTSINALTRPWKKYRDGELFYGLSKVGNKRVPLTTKQGNKTMYKGTRASGIGRHTKFGGYVINWKKVRTYVTPDMVNFELKPYVNANVPPLKHEFKGFSGGPLDPRLQLLKIKEYIVNGRVQSEGATDTSCYKERG</sequence>
<dbReference type="EMBL" id="S77888">
    <property type="protein sequence ID" value="AAB21096.2"/>
    <property type="molecule type" value="Genomic_DNA"/>
</dbReference>
<dbReference type="EMBL" id="X76053">
    <property type="protein sequence ID" value="CAA53645.1"/>
    <property type="molecule type" value="Genomic_DNA"/>
</dbReference>
<dbReference type="EMBL" id="Z36151">
    <property type="protein sequence ID" value="CAA85246.1"/>
    <property type="molecule type" value="Genomic_DNA"/>
</dbReference>
<dbReference type="EMBL" id="BK006936">
    <property type="protein sequence ID" value="DAA07397.1"/>
    <property type="molecule type" value="Genomic_DNA"/>
</dbReference>
<dbReference type="PIR" id="S27285">
    <property type="entry name" value="S27285"/>
</dbReference>
<dbReference type="RefSeq" id="NP_009841.1">
    <property type="nucleotide sequence ID" value="NM_001178630.1"/>
</dbReference>
<dbReference type="PDB" id="3J6B">
    <property type="method" value="EM"/>
    <property type="resolution" value="3.20 A"/>
    <property type="chains" value="3=1-146"/>
</dbReference>
<dbReference type="PDB" id="5MRC">
    <property type="method" value="EM"/>
    <property type="resolution" value="3.25 A"/>
    <property type="chains" value="3=17-146"/>
</dbReference>
<dbReference type="PDB" id="5MRE">
    <property type="method" value="EM"/>
    <property type="resolution" value="3.75 A"/>
    <property type="chains" value="3=17-146"/>
</dbReference>
<dbReference type="PDB" id="5MRF">
    <property type="method" value="EM"/>
    <property type="resolution" value="4.97 A"/>
    <property type="chains" value="3=17-146"/>
</dbReference>
<dbReference type="PDBsum" id="3J6B"/>
<dbReference type="PDBsum" id="5MRC"/>
<dbReference type="PDBsum" id="5MRE"/>
<dbReference type="PDBsum" id="5MRF"/>
<dbReference type="EMDB" id="EMD-3551"/>
<dbReference type="EMDB" id="EMD-3552"/>
<dbReference type="EMDB" id="EMD-3553"/>
<dbReference type="SMR" id="P36526"/>
<dbReference type="BioGRID" id="32976">
    <property type="interactions" value="352"/>
</dbReference>
<dbReference type="ComplexPortal" id="CPX-1602">
    <property type="entry name" value="54S mitochondrial large ribosomal subunit"/>
</dbReference>
<dbReference type="DIP" id="DIP-4961N"/>
<dbReference type="FunCoup" id="P36526">
    <property type="interactions" value="189"/>
</dbReference>
<dbReference type="IntAct" id="P36526">
    <property type="interactions" value="64"/>
</dbReference>
<dbReference type="MINT" id="P36526"/>
<dbReference type="STRING" id="4932.YBR282W"/>
<dbReference type="iPTMnet" id="P36526"/>
<dbReference type="PaxDb" id="4932-YBR282W"/>
<dbReference type="PeptideAtlas" id="P36526"/>
<dbReference type="EnsemblFungi" id="YBR282W_mRNA">
    <property type="protein sequence ID" value="YBR282W"/>
    <property type="gene ID" value="YBR282W"/>
</dbReference>
<dbReference type="GeneID" id="852585"/>
<dbReference type="KEGG" id="sce:YBR282W"/>
<dbReference type="AGR" id="SGD:S000000486"/>
<dbReference type="SGD" id="S000000486">
    <property type="gene designation" value="MRPL27"/>
</dbReference>
<dbReference type="VEuPathDB" id="FungiDB:YBR282W"/>
<dbReference type="eggNOG" id="KOG4756">
    <property type="taxonomic scope" value="Eukaryota"/>
</dbReference>
<dbReference type="HOGENOM" id="CLU_1778531_0_0_1"/>
<dbReference type="InParanoid" id="P36526"/>
<dbReference type="OMA" id="KHTKYGE"/>
<dbReference type="OrthoDB" id="408933at2759"/>
<dbReference type="BioCyc" id="YEAST:G3O-29202-MONOMER"/>
<dbReference type="BioGRID-ORCS" id="852585">
    <property type="hits" value="0 hits in 10 CRISPR screens"/>
</dbReference>
<dbReference type="PRO" id="PR:P36526"/>
<dbReference type="Proteomes" id="UP000002311">
    <property type="component" value="Chromosome II"/>
</dbReference>
<dbReference type="RNAct" id="P36526">
    <property type="molecule type" value="protein"/>
</dbReference>
<dbReference type="GO" id="GO:0005743">
    <property type="term" value="C:mitochondrial inner membrane"/>
    <property type="evidence" value="ECO:0000303"/>
    <property type="project" value="ComplexPortal"/>
</dbReference>
<dbReference type="GO" id="GO:0005762">
    <property type="term" value="C:mitochondrial large ribosomal subunit"/>
    <property type="evidence" value="ECO:0000314"/>
    <property type="project" value="SGD"/>
</dbReference>
<dbReference type="GO" id="GO:0005739">
    <property type="term" value="C:mitochondrion"/>
    <property type="evidence" value="ECO:0007005"/>
    <property type="project" value="SGD"/>
</dbReference>
<dbReference type="GO" id="GO:0003735">
    <property type="term" value="F:structural constituent of ribosome"/>
    <property type="evidence" value="ECO:0000314"/>
    <property type="project" value="SGD"/>
</dbReference>
<dbReference type="GO" id="GO:0032543">
    <property type="term" value="P:mitochondrial translation"/>
    <property type="evidence" value="ECO:0000303"/>
    <property type="project" value="ComplexPortal"/>
</dbReference>
<dbReference type="GO" id="GO:0006412">
    <property type="term" value="P:translation"/>
    <property type="evidence" value="ECO:0000318"/>
    <property type="project" value="GO_Central"/>
</dbReference>
<dbReference type="InterPro" id="IPR019189">
    <property type="entry name" value="Ribosomal_mL41"/>
</dbReference>
<dbReference type="PANTHER" id="PTHR21338:SF0">
    <property type="entry name" value="LARGE RIBOSOMAL SUBUNIT PROTEIN ML41"/>
    <property type="match status" value="1"/>
</dbReference>
<dbReference type="PANTHER" id="PTHR21338">
    <property type="entry name" value="MITOCHONDRIAL RIBOSOMAL PROTEIN L41"/>
    <property type="match status" value="1"/>
</dbReference>
<dbReference type="Pfam" id="PF09809">
    <property type="entry name" value="MRP-L27"/>
    <property type="match status" value="1"/>
</dbReference>
<comment type="function">
    <text evidence="11 12">Component of the mitochondrial ribosome (mitoribosome), a dedicated translation machinery responsible for the synthesis of mitochondrial genome-encoded proteins, including at least some of the essential transmembrane subunits of the mitochondrial respiratory chain. The mitoribosomes are attached to the mitochondrial inner membrane and translation products are cotranslationally integrated into the membrane.</text>
</comment>
<comment type="subunit">
    <text evidence="1 6 7">Component of the mitochondrial large ribosomal subunit (mt-LSU). Mature yeast 74S mitochondrial ribosomes consist of a small (37S) and a large (54S) subunit. The 37S small subunit contains a 15S ribosomal RNA (15S mt-rRNA) and 34 different proteins. The 54S large subunit contains a 21S rRNA (21S mt-rRNA) and 46 different proteins.</text>
</comment>
<comment type="subcellular location">
    <subcellularLocation>
        <location evidence="2 4">Mitochondrion</location>
    </subcellularLocation>
    <text evidence="8">Mitoribosomes are tethered to the mitochondrial inner membrane and spatially aligned with the membrane insertion machinery through two distinct membrane contact sites, formed by the 21S rRNA expansion segment 96-ES1 and the inner membrane protein MBA1.</text>
</comment>
<comment type="miscellaneous">
    <text evidence="3">Present with 2250 molecules/cell in log phase SD medium.</text>
</comment>
<comment type="similarity">
    <text evidence="10">Belongs to the mitochondrion-specific ribosomal protein mL41 family.</text>
</comment>
<name>RM27_YEAST</name>